<protein>
    <recommendedName>
        <fullName>Flagellar L-ring protein</fullName>
    </recommendedName>
    <alternativeName>
        <fullName>Basal body L-ring protein</fullName>
    </alternativeName>
</protein>
<sequence>MRRISIVLLIVFATSIFPFSIWNSAGESEYKNLLSIKKASKVGDILTIVIRESNNVSSERESLEIQKTLLNILGNVVNAAAGVNLNNFIPINNNSPERQRGGKVQSSVVAKISAVVVDIDPYGNLVVEGRKTIKVDKDYQEIIVKGKVRPDDIEIGNEVDSSKLADSEIWVNGKLVFSEEPGKESFFDKILAFLAGLFT</sequence>
<organism>
    <name type="scientific">Thermotoga maritima (strain ATCC 43589 / DSM 3109 / JCM 10099 / NBRC 100826 / MSB8)</name>
    <dbReference type="NCBI Taxonomy" id="243274"/>
    <lineage>
        <taxon>Bacteria</taxon>
        <taxon>Thermotogati</taxon>
        <taxon>Thermotogota</taxon>
        <taxon>Thermotogae</taxon>
        <taxon>Thermotogales</taxon>
        <taxon>Thermotogaceae</taxon>
        <taxon>Thermotoga</taxon>
    </lineage>
</organism>
<evidence type="ECO:0000250" key="1"/>
<evidence type="ECO:0000255" key="2"/>
<evidence type="ECO:0000305" key="3"/>
<feature type="signal peptide" evidence="2">
    <location>
        <begin position="1"/>
        <end position="25"/>
    </location>
</feature>
<feature type="chain" id="PRO_0000009475" description="Flagellar L-ring protein">
    <location>
        <begin position="26"/>
        <end position="199"/>
    </location>
</feature>
<accession>Q9X1M6</accession>
<proteinExistence type="inferred from homology"/>
<dbReference type="EMBL" id="AE000512">
    <property type="protein sequence ID" value="AAD36607.1"/>
    <property type="molecule type" value="Genomic_DNA"/>
</dbReference>
<dbReference type="PIR" id="H72242">
    <property type="entry name" value="H72242"/>
</dbReference>
<dbReference type="RefSeq" id="NP_229340.1">
    <property type="nucleotide sequence ID" value="NC_000853.1"/>
</dbReference>
<dbReference type="RefSeq" id="WP_004081924.1">
    <property type="nucleotide sequence ID" value="NC_000853.1"/>
</dbReference>
<dbReference type="SMR" id="Q9X1M6"/>
<dbReference type="STRING" id="243274.TM_1540"/>
<dbReference type="PaxDb" id="243274-THEMA_06585"/>
<dbReference type="EnsemblBacteria" id="AAD36607">
    <property type="protein sequence ID" value="AAD36607"/>
    <property type="gene ID" value="TM_1540"/>
</dbReference>
<dbReference type="KEGG" id="tma:TM1540"/>
<dbReference type="KEGG" id="tmi:THEMA_06585"/>
<dbReference type="KEGG" id="tmm:Tmari_1548"/>
<dbReference type="KEGG" id="tmw:THMA_1574"/>
<dbReference type="eggNOG" id="COG2063">
    <property type="taxonomic scope" value="Bacteria"/>
</dbReference>
<dbReference type="InParanoid" id="Q9X1M6"/>
<dbReference type="OrthoDB" id="37468at2"/>
<dbReference type="Proteomes" id="UP000008183">
    <property type="component" value="Chromosome"/>
</dbReference>
<dbReference type="GO" id="GO:0009427">
    <property type="term" value="C:bacterial-type flagellum basal body, distal rod, L ring"/>
    <property type="evidence" value="ECO:0007669"/>
    <property type="project" value="InterPro"/>
</dbReference>
<dbReference type="GO" id="GO:0009279">
    <property type="term" value="C:cell outer membrane"/>
    <property type="evidence" value="ECO:0007669"/>
    <property type="project" value="UniProtKB-SubCell"/>
</dbReference>
<dbReference type="GO" id="GO:0003774">
    <property type="term" value="F:cytoskeletal motor activity"/>
    <property type="evidence" value="ECO:0007669"/>
    <property type="project" value="InterPro"/>
</dbReference>
<dbReference type="GO" id="GO:0071973">
    <property type="term" value="P:bacterial-type flagellum-dependent cell motility"/>
    <property type="evidence" value="ECO:0007669"/>
    <property type="project" value="InterPro"/>
</dbReference>
<dbReference type="HAMAP" id="MF_00415">
    <property type="entry name" value="FlgH"/>
    <property type="match status" value="1"/>
</dbReference>
<dbReference type="InterPro" id="IPR000527">
    <property type="entry name" value="Flag_Lring"/>
</dbReference>
<dbReference type="PANTHER" id="PTHR34933">
    <property type="entry name" value="FLAGELLAR L-RING PROTEIN"/>
    <property type="match status" value="1"/>
</dbReference>
<dbReference type="PANTHER" id="PTHR34933:SF1">
    <property type="entry name" value="FLAGELLAR L-RING PROTEIN"/>
    <property type="match status" value="1"/>
</dbReference>
<dbReference type="Pfam" id="PF02107">
    <property type="entry name" value="FlgH"/>
    <property type="match status" value="1"/>
</dbReference>
<dbReference type="PRINTS" id="PR01008">
    <property type="entry name" value="FLGLRINGFLGH"/>
</dbReference>
<comment type="function">
    <text evidence="1">Assembles around the rod to form the L-ring and probably protects the motor/basal body from shearing forces during rotation.</text>
</comment>
<comment type="subunit">
    <text evidence="1">The basal body constitutes a major portion of the flagellar organelle and consists of four rings (L,P,S, and M) mounted on a central rod.</text>
</comment>
<comment type="subcellular location">
    <subcellularLocation>
        <location evidence="1">Cell outer membrane</location>
    </subcellularLocation>
    <subcellularLocation>
        <location evidence="1">Bacterial flagellum basal body</location>
    </subcellularLocation>
</comment>
<comment type="similarity">
    <text evidence="3">Belongs to the FlgH family.</text>
</comment>
<reference key="1">
    <citation type="journal article" date="1999" name="Nature">
        <title>Evidence for lateral gene transfer between Archaea and Bacteria from genome sequence of Thermotoga maritima.</title>
        <authorList>
            <person name="Nelson K.E."/>
            <person name="Clayton R.A."/>
            <person name="Gill S.R."/>
            <person name="Gwinn M.L."/>
            <person name="Dodson R.J."/>
            <person name="Haft D.H."/>
            <person name="Hickey E.K."/>
            <person name="Peterson J.D."/>
            <person name="Nelson W.C."/>
            <person name="Ketchum K.A."/>
            <person name="McDonald L.A."/>
            <person name="Utterback T.R."/>
            <person name="Malek J.A."/>
            <person name="Linher K.D."/>
            <person name="Garrett M.M."/>
            <person name="Stewart A.M."/>
            <person name="Cotton M.D."/>
            <person name="Pratt M.S."/>
            <person name="Phillips C.A."/>
            <person name="Richardson D.L."/>
            <person name="Heidelberg J.F."/>
            <person name="Sutton G.G."/>
            <person name="Fleischmann R.D."/>
            <person name="Eisen J.A."/>
            <person name="White O."/>
            <person name="Salzberg S.L."/>
            <person name="Smith H.O."/>
            <person name="Venter J.C."/>
            <person name="Fraser C.M."/>
        </authorList>
    </citation>
    <scope>NUCLEOTIDE SEQUENCE [LARGE SCALE GENOMIC DNA]</scope>
    <source>
        <strain>ATCC 43589 / DSM 3109 / JCM 10099 / NBRC 100826 / MSB8</strain>
    </source>
</reference>
<gene>
    <name type="primary">flgH</name>
    <name type="ordered locus">TM_1540</name>
</gene>
<name>FLGH_THEMA</name>
<keyword id="KW-0975">Bacterial flagellum</keyword>
<keyword id="KW-0998">Cell outer membrane</keyword>
<keyword id="KW-0472">Membrane</keyword>
<keyword id="KW-1185">Reference proteome</keyword>
<keyword id="KW-0732">Signal</keyword>